<keyword id="KW-0963">Cytoplasm</keyword>
<keyword id="KW-0648">Protein biosynthesis</keyword>
<keyword id="KW-0663">Pyridoxal phosphate</keyword>
<keyword id="KW-0711">Selenium</keyword>
<keyword id="KW-0808">Transferase</keyword>
<feature type="chain" id="PRO_1000050371" description="L-seryl-tRNA(Sec) selenium transferase">
    <location>
        <begin position="1"/>
        <end position="465"/>
    </location>
</feature>
<feature type="modified residue" description="N6-(pyridoxal phosphate)lysine" evidence="1">
    <location>
        <position position="294"/>
    </location>
</feature>
<sequence>MTALFQQLPSVDKILKTPQGEQLVTEFGHSAVVNCCRHLLAQAREKIKIEKKLPHFFTDFNHTIAEVNRYLANQQQVKIKSVHNLTGTVLHTNLGRALWAQSAQQAALTAMRQNVALEYDLEAGKRSHRDNYVSELLHELTGAQAACVVNNNAAAVLLMLATFAQGKEVIISRGELIEIGGAFRIPDIMAQAGCKLVEVGTTNRTHLNDYRRAINENTALLMKVHSSNYQICGFTCEVSEQELVELGKEFNIPVVTDLGSGALTDLSRYDLPKEPTVQEKLVQGADLISFSGDKLLGGPQAGIIVGKKELIQQLQSHPLKRVLRCDKVILAAMEATLRLYLQPEKLTEKLTSLRLLTQPLEQLRQQAEQLKAKLENLLKDDFLLQIESSLAQIGSGSQPMAKIPSIAVTIAEKNSEKLTALLARFKKLSTPIIARVENDKIRLDLRSVTAIETLLITLEELNQDQ</sequence>
<organism>
    <name type="scientific">Mannheimia succiniciproducens (strain KCTC 0769BP / MBEL55E)</name>
    <dbReference type="NCBI Taxonomy" id="221988"/>
    <lineage>
        <taxon>Bacteria</taxon>
        <taxon>Pseudomonadati</taxon>
        <taxon>Pseudomonadota</taxon>
        <taxon>Gammaproteobacteria</taxon>
        <taxon>Pasteurellales</taxon>
        <taxon>Pasteurellaceae</taxon>
        <taxon>Basfia</taxon>
    </lineage>
</organism>
<proteinExistence type="inferred from homology"/>
<dbReference type="EC" id="2.9.1.1" evidence="1"/>
<dbReference type="EMBL" id="AE016827">
    <property type="protein sequence ID" value="AAU38945.1"/>
    <property type="molecule type" value="Genomic_DNA"/>
</dbReference>
<dbReference type="RefSeq" id="WP_011201483.1">
    <property type="nucleotide sequence ID" value="NC_006300.1"/>
</dbReference>
<dbReference type="SMR" id="Q65Q15"/>
<dbReference type="STRING" id="221988.MS2338"/>
<dbReference type="KEGG" id="msu:MS2338"/>
<dbReference type="eggNOG" id="COG1921">
    <property type="taxonomic scope" value="Bacteria"/>
</dbReference>
<dbReference type="HOGENOM" id="CLU_038142_1_0_6"/>
<dbReference type="OrthoDB" id="9787096at2"/>
<dbReference type="UniPathway" id="UPA00906">
    <property type="reaction ID" value="UER00896"/>
</dbReference>
<dbReference type="Proteomes" id="UP000000607">
    <property type="component" value="Chromosome"/>
</dbReference>
<dbReference type="GO" id="GO:0005737">
    <property type="term" value="C:cytoplasm"/>
    <property type="evidence" value="ECO:0007669"/>
    <property type="project" value="UniProtKB-SubCell"/>
</dbReference>
<dbReference type="GO" id="GO:0004125">
    <property type="term" value="F:L-seryl-tRNA(Sec) selenium transferase activity"/>
    <property type="evidence" value="ECO:0007669"/>
    <property type="project" value="UniProtKB-UniRule"/>
</dbReference>
<dbReference type="GO" id="GO:0001717">
    <property type="term" value="P:conversion of seryl-tRNAsec to selenocys-tRNAsec"/>
    <property type="evidence" value="ECO:0007669"/>
    <property type="project" value="UniProtKB-UniRule"/>
</dbReference>
<dbReference type="GO" id="GO:0001514">
    <property type="term" value="P:selenocysteine incorporation"/>
    <property type="evidence" value="ECO:0007669"/>
    <property type="project" value="UniProtKB-UniRule"/>
</dbReference>
<dbReference type="FunFam" id="3.40.640.10:FF:000028">
    <property type="entry name" value="L-seryl-tRNA(Sec) selenium transferase"/>
    <property type="match status" value="1"/>
</dbReference>
<dbReference type="Gene3D" id="3.90.1150.180">
    <property type="match status" value="1"/>
</dbReference>
<dbReference type="Gene3D" id="3.40.640.10">
    <property type="entry name" value="Type I PLP-dependent aspartate aminotransferase-like (Major domain)"/>
    <property type="match status" value="1"/>
</dbReference>
<dbReference type="HAMAP" id="MF_00423">
    <property type="entry name" value="SelA"/>
    <property type="match status" value="1"/>
</dbReference>
<dbReference type="InterPro" id="IPR015424">
    <property type="entry name" value="PyrdxlP-dep_Trfase"/>
</dbReference>
<dbReference type="InterPro" id="IPR015421">
    <property type="entry name" value="PyrdxlP-dep_Trfase_major"/>
</dbReference>
<dbReference type="InterPro" id="IPR018319">
    <property type="entry name" value="SelA-like"/>
</dbReference>
<dbReference type="InterPro" id="IPR004534">
    <property type="entry name" value="SelA_trans"/>
</dbReference>
<dbReference type="InterPro" id="IPR025862">
    <property type="entry name" value="SelA_trans_N_dom"/>
</dbReference>
<dbReference type="NCBIfam" id="TIGR00474">
    <property type="entry name" value="selA"/>
    <property type="match status" value="1"/>
</dbReference>
<dbReference type="PANTHER" id="PTHR32328">
    <property type="entry name" value="L-SERYL-TRNA(SEC) SELENIUM TRANSFERASE"/>
    <property type="match status" value="1"/>
</dbReference>
<dbReference type="PANTHER" id="PTHR32328:SF0">
    <property type="entry name" value="L-SERYL-TRNA(SEC) SELENIUM TRANSFERASE"/>
    <property type="match status" value="1"/>
</dbReference>
<dbReference type="Pfam" id="PF12390">
    <property type="entry name" value="Se-cys_synth_N"/>
    <property type="match status" value="1"/>
</dbReference>
<dbReference type="Pfam" id="PF03841">
    <property type="entry name" value="SelA"/>
    <property type="match status" value="1"/>
</dbReference>
<dbReference type="SUPFAM" id="SSF53383">
    <property type="entry name" value="PLP-dependent transferases"/>
    <property type="match status" value="1"/>
</dbReference>
<accession>Q65Q15</accession>
<gene>
    <name evidence="1" type="primary">selA</name>
    <name type="ordered locus">MS2338</name>
</gene>
<comment type="function">
    <text evidence="1">Converts seryl-tRNA(Sec) to selenocysteinyl-tRNA(Sec) required for selenoprotein biosynthesis.</text>
</comment>
<comment type="catalytic activity">
    <reaction evidence="1">
        <text>L-seryl-tRNA(Sec) + selenophosphate + H(+) = L-selenocysteinyl-tRNA(Sec) + phosphate</text>
        <dbReference type="Rhea" id="RHEA:22728"/>
        <dbReference type="Rhea" id="RHEA-COMP:9742"/>
        <dbReference type="Rhea" id="RHEA-COMP:9743"/>
        <dbReference type="ChEBI" id="CHEBI:15378"/>
        <dbReference type="ChEBI" id="CHEBI:16144"/>
        <dbReference type="ChEBI" id="CHEBI:43474"/>
        <dbReference type="ChEBI" id="CHEBI:78533"/>
        <dbReference type="ChEBI" id="CHEBI:78573"/>
        <dbReference type="EC" id="2.9.1.1"/>
    </reaction>
</comment>
<comment type="cofactor">
    <cofactor evidence="1">
        <name>pyridoxal 5'-phosphate</name>
        <dbReference type="ChEBI" id="CHEBI:597326"/>
    </cofactor>
</comment>
<comment type="pathway">
    <text evidence="1">Aminoacyl-tRNA biosynthesis; selenocysteinyl-tRNA(Sec) biosynthesis; selenocysteinyl-tRNA(Sec) from L-seryl-tRNA(Sec) (bacterial route): step 1/1.</text>
</comment>
<comment type="subcellular location">
    <subcellularLocation>
        <location evidence="1">Cytoplasm</location>
    </subcellularLocation>
</comment>
<comment type="similarity">
    <text evidence="1">Belongs to the SelA family.</text>
</comment>
<evidence type="ECO:0000255" key="1">
    <source>
        <dbReference type="HAMAP-Rule" id="MF_00423"/>
    </source>
</evidence>
<name>SELA_MANSM</name>
<reference key="1">
    <citation type="journal article" date="2004" name="Nat. Biotechnol.">
        <title>The genome sequence of the capnophilic rumen bacterium Mannheimia succiniciproducens.</title>
        <authorList>
            <person name="Hong S.H."/>
            <person name="Kim J.S."/>
            <person name="Lee S.Y."/>
            <person name="In Y.H."/>
            <person name="Choi S.S."/>
            <person name="Rih J.-K."/>
            <person name="Kim C.H."/>
            <person name="Jeong H."/>
            <person name="Hur C.G."/>
            <person name="Kim J.J."/>
        </authorList>
    </citation>
    <scope>NUCLEOTIDE SEQUENCE [LARGE SCALE GENOMIC DNA]</scope>
    <source>
        <strain>KCTC 0769BP / MBEL55E</strain>
    </source>
</reference>
<protein>
    <recommendedName>
        <fullName evidence="1">L-seryl-tRNA(Sec) selenium transferase</fullName>
        <ecNumber evidence="1">2.9.1.1</ecNumber>
    </recommendedName>
    <alternativeName>
        <fullName evidence="1">Selenocysteine synthase</fullName>
        <shortName evidence="1">Sec synthase</shortName>
    </alternativeName>
    <alternativeName>
        <fullName evidence="1">Selenocysteinyl-tRNA(Sec) synthase</fullName>
    </alternativeName>
</protein>